<feature type="chain" id="PRO_0000425411" description="Putative truncated protein trichome birefringence-like 46">
    <location>
        <begin position="1"/>
        <end position="139"/>
    </location>
</feature>
<dbReference type="EMBL" id="AL358732">
    <property type="protein sequence ID" value="CAB94138.1"/>
    <property type="status" value="ALT_SEQ"/>
    <property type="molecule type" value="Genomic_DNA"/>
</dbReference>
<dbReference type="EMBL" id="CP002686">
    <property type="status" value="NOT_ANNOTATED_CDS"/>
    <property type="molecule type" value="Genomic_DNA"/>
</dbReference>
<dbReference type="EMBL" id="AY057684">
    <property type="protein sequence ID" value="AAL15315.1"/>
    <property type="molecule type" value="mRNA"/>
</dbReference>
<dbReference type="EMBL" id="AY116946">
    <property type="protein sequence ID" value="AAM51580.1"/>
    <property type="molecule type" value="mRNA"/>
</dbReference>
<dbReference type="PIR" id="T50523">
    <property type="entry name" value="T50523"/>
</dbReference>
<dbReference type="SMR" id="Q93ZA5"/>
<dbReference type="PeptideAtlas" id="Q93ZA5"/>
<dbReference type="Araport" id="AT3G61020"/>
<dbReference type="TAIR" id="AT3G61020"/>
<dbReference type="InParanoid" id="Q93ZA5"/>
<dbReference type="Proteomes" id="UP000006548">
    <property type="component" value="Chromosome 3"/>
</dbReference>
<dbReference type="GO" id="GO:0016413">
    <property type="term" value="F:O-acetyltransferase activity"/>
    <property type="evidence" value="ECO:0007669"/>
    <property type="project" value="InterPro"/>
</dbReference>
<dbReference type="InterPro" id="IPR029962">
    <property type="entry name" value="TBL"/>
</dbReference>
<dbReference type="InterPro" id="IPR026057">
    <property type="entry name" value="TBL_C"/>
</dbReference>
<dbReference type="PANTHER" id="PTHR32285:SF282">
    <property type="entry name" value="PROTEIN TRICHOME BIREFRINGENCE-LIKE 32"/>
    <property type="match status" value="1"/>
</dbReference>
<dbReference type="PANTHER" id="PTHR32285">
    <property type="entry name" value="PROTEIN TRICHOME BIREFRINGENCE-LIKE 9-RELATED"/>
    <property type="match status" value="1"/>
</dbReference>
<dbReference type="Pfam" id="PF13839">
    <property type="entry name" value="PC-Esterase"/>
    <property type="match status" value="1"/>
</dbReference>
<accession>Q93ZA5</accession>
<accession>Q7FB57</accession>
<proteinExistence type="uncertain"/>
<gene>
    <name type="primary">TBL46</name>
    <name type="ordered locus">At3g61020</name>
    <name type="ORF">T27I15.110</name>
</gene>
<organism>
    <name type="scientific">Arabidopsis thaliana</name>
    <name type="common">Mouse-ear cress</name>
    <dbReference type="NCBI Taxonomy" id="3702"/>
    <lineage>
        <taxon>Eukaryota</taxon>
        <taxon>Viridiplantae</taxon>
        <taxon>Streptophyta</taxon>
        <taxon>Embryophyta</taxon>
        <taxon>Tracheophyta</taxon>
        <taxon>Spermatophyta</taxon>
        <taxon>Magnoliopsida</taxon>
        <taxon>eudicotyledons</taxon>
        <taxon>Gunneridae</taxon>
        <taxon>Pentapetalae</taxon>
        <taxon>rosids</taxon>
        <taxon>malvids</taxon>
        <taxon>Brassicales</taxon>
        <taxon>Brassicaceae</taxon>
        <taxon>Camelineae</taxon>
        <taxon>Arabidopsis</taxon>
    </lineage>
</organism>
<name>TBL46_ARATH</name>
<sequence length="139" mass="16060">MKILESSFKDGNKRIVEMESEDAYLMTMGKWVKKSMDPLRTKVFFSTMSPTHYKIEDWGGEQGKNFYNQTTPIQDMNHWPSDCSKTLMKVIGEELDQRADFLVTVLNITQLTSYRKDAHTSIYKKPWSPYDEGSASKSG</sequence>
<reference key="1">
    <citation type="journal article" date="2000" name="Nature">
        <title>Sequence and analysis of chromosome 3 of the plant Arabidopsis thaliana.</title>
        <authorList>
            <person name="Salanoubat M."/>
            <person name="Lemcke K."/>
            <person name="Rieger M."/>
            <person name="Ansorge W."/>
            <person name="Unseld M."/>
            <person name="Fartmann B."/>
            <person name="Valle G."/>
            <person name="Bloecker H."/>
            <person name="Perez-Alonso M."/>
            <person name="Obermaier B."/>
            <person name="Delseny M."/>
            <person name="Boutry M."/>
            <person name="Grivell L.A."/>
            <person name="Mache R."/>
            <person name="Puigdomenech P."/>
            <person name="De Simone V."/>
            <person name="Choisne N."/>
            <person name="Artiguenave F."/>
            <person name="Robert C."/>
            <person name="Brottier P."/>
            <person name="Wincker P."/>
            <person name="Cattolico L."/>
            <person name="Weissenbach J."/>
            <person name="Saurin W."/>
            <person name="Quetier F."/>
            <person name="Schaefer M."/>
            <person name="Mueller-Auer S."/>
            <person name="Gabel C."/>
            <person name="Fuchs M."/>
            <person name="Benes V."/>
            <person name="Wurmbach E."/>
            <person name="Drzonek H."/>
            <person name="Erfle H."/>
            <person name="Jordan N."/>
            <person name="Bangert S."/>
            <person name="Wiedelmann R."/>
            <person name="Kranz H."/>
            <person name="Voss H."/>
            <person name="Holland R."/>
            <person name="Brandt P."/>
            <person name="Nyakatura G."/>
            <person name="Vezzi A."/>
            <person name="D'Angelo M."/>
            <person name="Pallavicini A."/>
            <person name="Toppo S."/>
            <person name="Simionati B."/>
            <person name="Conrad A."/>
            <person name="Hornischer K."/>
            <person name="Kauer G."/>
            <person name="Loehnert T.-H."/>
            <person name="Nordsiek G."/>
            <person name="Reichelt J."/>
            <person name="Scharfe M."/>
            <person name="Schoen O."/>
            <person name="Bargues M."/>
            <person name="Terol J."/>
            <person name="Climent J."/>
            <person name="Navarro P."/>
            <person name="Collado C."/>
            <person name="Perez-Perez A."/>
            <person name="Ottenwaelder B."/>
            <person name="Duchemin D."/>
            <person name="Cooke R."/>
            <person name="Laudie M."/>
            <person name="Berger-Llauro C."/>
            <person name="Purnelle B."/>
            <person name="Masuy D."/>
            <person name="de Haan M."/>
            <person name="Maarse A.C."/>
            <person name="Alcaraz J.-P."/>
            <person name="Cottet A."/>
            <person name="Casacuberta E."/>
            <person name="Monfort A."/>
            <person name="Argiriou A."/>
            <person name="Flores M."/>
            <person name="Liguori R."/>
            <person name="Vitale D."/>
            <person name="Mannhaupt G."/>
            <person name="Haase D."/>
            <person name="Schoof H."/>
            <person name="Rudd S."/>
            <person name="Zaccaria P."/>
            <person name="Mewes H.-W."/>
            <person name="Mayer K.F.X."/>
            <person name="Kaul S."/>
            <person name="Town C.D."/>
            <person name="Koo H.L."/>
            <person name="Tallon L.J."/>
            <person name="Jenkins J."/>
            <person name="Rooney T."/>
            <person name="Rizzo M."/>
            <person name="Walts A."/>
            <person name="Utterback T."/>
            <person name="Fujii C.Y."/>
            <person name="Shea T.P."/>
            <person name="Creasy T.H."/>
            <person name="Haas B."/>
            <person name="Maiti R."/>
            <person name="Wu D."/>
            <person name="Peterson J."/>
            <person name="Van Aken S."/>
            <person name="Pai G."/>
            <person name="Militscher J."/>
            <person name="Sellers P."/>
            <person name="Gill J.E."/>
            <person name="Feldblyum T.V."/>
            <person name="Preuss D."/>
            <person name="Lin X."/>
            <person name="Nierman W.C."/>
            <person name="Salzberg S.L."/>
            <person name="White O."/>
            <person name="Venter J.C."/>
            <person name="Fraser C.M."/>
            <person name="Kaneko T."/>
            <person name="Nakamura Y."/>
            <person name="Sato S."/>
            <person name="Kato T."/>
            <person name="Asamizu E."/>
            <person name="Sasamoto S."/>
            <person name="Kimura T."/>
            <person name="Idesawa K."/>
            <person name="Kawashima K."/>
            <person name="Kishida Y."/>
            <person name="Kiyokawa C."/>
            <person name="Kohara M."/>
            <person name="Matsumoto M."/>
            <person name="Matsuno A."/>
            <person name="Muraki A."/>
            <person name="Nakayama S."/>
            <person name="Nakazaki N."/>
            <person name="Shinpo S."/>
            <person name="Takeuchi C."/>
            <person name="Wada T."/>
            <person name="Watanabe A."/>
            <person name="Yamada M."/>
            <person name="Yasuda M."/>
            <person name="Tabata S."/>
        </authorList>
    </citation>
    <scope>NUCLEOTIDE SEQUENCE [LARGE SCALE GENOMIC DNA]</scope>
    <source>
        <strain>cv. Columbia</strain>
    </source>
</reference>
<reference key="2">
    <citation type="journal article" date="2017" name="Plant J.">
        <title>Araport11: a complete reannotation of the Arabidopsis thaliana reference genome.</title>
        <authorList>
            <person name="Cheng C.Y."/>
            <person name="Krishnakumar V."/>
            <person name="Chan A.P."/>
            <person name="Thibaud-Nissen F."/>
            <person name="Schobel S."/>
            <person name="Town C.D."/>
        </authorList>
    </citation>
    <scope>GENOME REANNOTATION</scope>
    <source>
        <strain>cv. Columbia</strain>
    </source>
</reference>
<reference key="3">
    <citation type="journal article" date="2003" name="Science">
        <title>Empirical analysis of transcriptional activity in the Arabidopsis genome.</title>
        <authorList>
            <person name="Yamada K."/>
            <person name="Lim J."/>
            <person name="Dale J.M."/>
            <person name="Chen H."/>
            <person name="Shinn P."/>
            <person name="Palm C.J."/>
            <person name="Southwick A.M."/>
            <person name="Wu H.C."/>
            <person name="Kim C.J."/>
            <person name="Nguyen M."/>
            <person name="Pham P.K."/>
            <person name="Cheuk R.F."/>
            <person name="Karlin-Newmann G."/>
            <person name="Liu S.X."/>
            <person name="Lam B."/>
            <person name="Sakano H."/>
            <person name="Wu T."/>
            <person name="Yu G."/>
            <person name="Miranda M."/>
            <person name="Quach H.L."/>
            <person name="Tripp M."/>
            <person name="Chang C.H."/>
            <person name="Lee J.M."/>
            <person name="Toriumi M.J."/>
            <person name="Chan M.M."/>
            <person name="Tang C.C."/>
            <person name="Onodera C.S."/>
            <person name="Deng J.M."/>
            <person name="Akiyama K."/>
            <person name="Ansari Y."/>
            <person name="Arakawa T."/>
            <person name="Banh J."/>
            <person name="Banno F."/>
            <person name="Bowser L."/>
            <person name="Brooks S.Y."/>
            <person name="Carninci P."/>
            <person name="Chao Q."/>
            <person name="Choy N."/>
            <person name="Enju A."/>
            <person name="Goldsmith A.D."/>
            <person name="Gurjal M."/>
            <person name="Hansen N.F."/>
            <person name="Hayashizaki Y."/>
            <person name="Johnson-Hopson C."/>
            <person name="Hsuan V.W."/>
            <person name="Iida K."/>
            <person name="Karnes M."/>
            <person name="Khan S."/>
            <person name="Koesema E."/>
            <person name="Ishida J."/>
            <person name="Jiang P.X."/>
            <person name="Jones T."/>
            <person name="Kawai J."/>
            <person name="Kamiya A."/>
            <person name="Meyers C."/>
            <person name="Nakajima M."/>
            <person name="Narusaka M."/>
            <person name="Seki M."/>
            <person name="Sakurai T."/>
            <person name="Satou M."/>
            <person name="Tamse R."/>
            <person name="Vaysberg M."/>
            <person name="Wallender E.K."/>
            <person name="Wong C."/>
            <person name="Yamamura Y."/>
            <person name="Yuan S."/>
            <person name="Shinozaki K."/>
            <person name="Davis R.W."/>
            <person name="Theologis A."/>
            <person name="Ecker J.R."/>
        </authorList>
    </citation>
    <scope>NUCLEOTIDE SEQUENCE [LARGE SCALE MRNA]</scope>
    <source>
        <strain>cv. Columbia</strain>
    </source>
</reference>
<reference key="4">
    <citation type="journal article" date="2007" name="Plant J.">
        <title>Arabidopsis ESK1 encodes a novel regulator of freezing tolerance.</title>
        <authorList>
            <person name="Xin Z."/>
            <person name="Mandaokar A."/>
            <person name="Chen J."/>
            <person name="Last R.L."/>
            <person name="Browse J."/>
        </authorList>
    </citation>
    <scope>GENE FAMILY</scope>
    <source>
        <strain>cv. Columbia</strain>
    </source>
</reference>
<comment type="similarity">
    <text evidence="1">Belongs to the PC-esterase family. TBL subfamily.</text>
</comment>
<comment type="caution">
    <text evidence="1">Could be the product of a pseudogene.</text>
</comment>
<comment type="sequence caution" evidence="1">
    <conflict type="erroneous gene model prediction">
        <sequence resource="EMBL-CDS" id="CAB94138"/>
    </conflict>
</comment>
<protein>
    <recommendedName>
        <fullName>Putative truncated protein trichome birefringence-like 46</fullName>
    </recommendedName>
</protein>
<keyword id="KW-1185">Reference proteome</keyword>
<evidence type="ECO:0000305" key="1"/>